<accession>Q64PU2</accession>
<organism>
    <name type="scientific">Bacteroides fragilis (strain YCH46)</name>
    <dbReference type="NCBI Taxonomy" id="295405"/>
    <lineage>
        <taxon>Bacteria</taxon>
        <taxon>Pseudomonadati</taxon>
        <taxon>Bacteroidota</taxon>
        <taxon>Bacteroidia</taxon>
        <taxon>Bacteroidales</taxon>
        <taxon>Bacteroidaceae</taxon>
        <taxon>Bacteroides</taxon>
    </lineage>
</organism>
<reference key="1">
    <citation type="journal article" date="2004" name="Proc. Natl. Acad. Sci. U.S.A.">
        <title>Genomic analysis of Bacteroides fragilis reveals extensive DNA inversions regulating cell surface adaptation.</title>
        <authorList>
            <person name="Kuwahara T."/>
            <person name="Yamashita A."/>
            <person name="Hirakawa H."/>
            <person name="Nakayama H."/>
            <person name="Toh H."/>
            <person name="Okada N."/>
            <person name="Kuhara S."/>
            <person name="Hattori M."/>
            <person name="Hayashi T."/>
            <person name="Ohnishi Y."/>
        </authorList>
    </citation>
    <scope>NUCLEOTIDE SEQUENCE [LARGE SCALE GENOMIC DNA]</scope>
    <source>
        <strain>YCH46</strain>
    </source>
</reference>
<protein>
    <recommendedName>
        <fullName evidence="1">Cytidylate kinase</fullName>
        <shortName evidence="1">CK</shortName>
        <ecNumber evidence="1">2.7.4.25</ecNumber>
    </recommendedName>
    <alternativeName>
        <fullName evidence="1">Cytidine monophosphate kinase</fullName>
        <shortName evidence="1">CMP kinase</shortName>
    </alternativeName>
</protein>
<evidence type="ECO:0000255" key="1">
    <source>
        <dbReference type="HAMAP-Rule" id="MF_00238"/>
    </source>
</evidence>
<name>KCY_BACFR</name>
<comment type="catalytic activity">
    <reaction evidence="1">
        <text>CMP + ATP = CDP + ADP</text>
        <dbReference type="Rhea" id="RHEA:11600"/>
        <dbReference type="ChEBI" id="CHEBI:30616"/>
        <dbReference type="ChEBI" id="CHEBI:58069"/>
        <dbReference type="ChEBI" id="CHEBI:60377"/>
        <dbReference type="ChEBI" id="CHEBI:456216"/>
        <dbReference type="EC" id="2.7.4.25"/>
    </reaction>
</comment>
<comment type="catalytic activity">
    <reaction evidence="1">
        <text>dCMP + ATP = dCDP + ADP</text>
        <dbReference type="Rhea" id="RHEA:25094"/>
        <dbReference type="ChEBI" id="CHEBI:30616"/>
        <dbReference type="ChEBI" id="CHEBI:57566"/>
        <dbReference type="ChEBI" id="CHEBI:58593"/>
        <dbReference type="ChEBI" id="CHEBI:456216"/>
        <dbReference type="EC" id="2.7.4.25"/>
    </reaction>
</comment>
<comment type="subcellular location">
    <subcellularLocation>
        <location evidence="1">Cytoplasm</location>
    </subcellularLocation>
</comment>
<comment type="similarity">
    <text evidence="1">Belongs to the cytidylate kinase family. Type 1 subfamily.</text>
</comment>
<feature type="chain" id="PRO_0000131876" description="Cytidylate kinase">
    <location>
        <begin position="1"/>
        <end position="229"/>
    </location>
</feature>
<feature type="binding site" evidence="1">
    <location>
        <begin position="10"/>
        <end position="18"/>
    </location>
    <ligand>
        <name>ATP</name>
        <dbReference type="ChEBI" id="CHEBI:30616"/>
    </ligand>
</feature>
<gene>
    <name evidence="1" type="primary">cmk</name>
    <name type="ordered locus">BF3747</name>
</gene>
<sequence length="229" mass="25649">MKKITIAIDGFSSCGKSTMAKDLAKEIGYIYIDSGAMYRAVTLYSIENGIFHGDTIDTDELKRRIGDIHISFRIDPETGRPNTYLNGVNVENKIRTMEVSSKVSPISALGFVREAMVAQQQEMGKAKGIVMDGRDIGTTVFPDAELKIFVTASAEIRAQRRYDELKAKGQETGFEEILENVKQRDHIDQTREVSPLKKADDALLLDNSHLTIAEQKEWLMAEYQKAIKA</sequence>
<dbReference type="EC" id="2.7.4.25" evidence="1"/>
<dbReference type="EMBL" id="AP006841">
    <property type="protein sequence ID" value="BAD50489.1"/>
    <property type="molecule type" value="Genomic_DNA"/>
</dbReference>
<dbReference type="RefSeq" id="WP_008769932.1">
    <property type="nucleotide sequence ID" value="NZ_UYXF01000023.1"/>
</dbReference>
<dbReference type="RefSeq" id="YP_101023.1">
    <property type="nucleotide sequence ID" value="NC_006347.1"/>
</dbReference>
<dbReference type="SMR" id="Q64PU2"/>
<dbReference type="STRING" id="295405.BF3747"/>
<dbReference type="GeneID" id="60366894"/>
<dbReference type="KEGG" id="bfr:BF3747"/>
<dbReference type="PATRIC" id="fig|295405.11.peg.3595"/>
<dbReference type="HOGENOM" id="CLU_079959_0_2_10"/>
<dbReference type="OrthoDB" id="9807434at2"/>
<dbReference type="Proteomes" id="UP000002197">
    <property type="component" value="Chromosome"/>
</dbReference>
<dbReference type="GO" id="GO:0005829">
    <property type="term" value="C:cytosol"/>
    <property type="evidence" value="ECO:0007669"/>
    <property type="project" value="TreeGrafter"/>
</dbReference>
<dbReference type="GO" id="GO:0005524">
    <property type="term" value="F:ATP binding"/>
    <property type="evidence" value="ECO:0007669"/>
    <property type="project" value="UniProtKB-UniRule"/>
</dbReference>
<dbReference type="GO" id="GO:0036430">
    <property type="term" value="F:CMP kinase activity"/>
    <property type="evidence" value="ECO:0007669"/>
    <property type="project" value="RHEA"/>
</dbReference>
<dbReference type="GO" id="GO:0036431">
    <property type="term" value="F:dCMP kinase activity"/>
    <property type="evidence" value="ECO:0007669"/>
    <property type="project" value="RHEA"/>
</dbReference>
<dbReference type="GO" id="GO:0015949">
    <property type="term" value="P:nucleobase-containing small molecule interconversion"/>
    <property type="evidence" value="ECO:0007669"/>
    <property type="project" value="TreeGrafter"/>
</dbReference>
<dbReference type="GO" id="GO:0006220">
    <property type="term" value="P:pyrimidine nucleotide metabolic process"/>
    <property type="evidence" value="ECO:0007669"/>
    <property type="project" value="UniProtKB-UniRule"/>
</dbReference>
<dbReference type="CDD" id="cd02020">
    <property type="entry name" value="CMPK"/>
    <property type="match status" value="1"/>
</dbReference>
<dbReference type="Gene3D" id="3.40.50.300">
    <property type="entry name" value="P-loop containing nucleotide triphosphate hydrolases"/>
    <property type="match status" value="1"/>
</dbReference>
<dbReference type="HAMAP" id="MF_00238">
    <property type="entry name" value="Cytidyl_kinase_type1"/>
    <property type="match status" value="1"/>
</dbReference>
<dbReference type="InterPro" id="IPR003136">
    <property type="entry name" value="Cytidylate_kin"/>
</dbReference>
<dbReference type="InterPro" id="IPR011994">
    <property type="entry name" value="Cytidylate_kinase_dom"/>
</dbReference>
<dbReference type="InterPro" id="IPR027417">
    <property type="entry name" value="P-loop_NTPase"/>
</dbReference>
<dbReference type="NCBIfam" id="TIGR00017">
    <property type="entry name" value="cmk"/>
    <property type="match status" value="1"/>
</dbReference>
<dbReference type="PANTHER" id="PTHR21299:SF2">
    <property type="entry name" value="CYTIDYLATE KINASE"/>
    <property type="match status" value="1"/>
</dbReference>
<dbReference type="PANTHER" id="PTHR21299">
    <property type="entry name" value="CYTIDYLATE KINASE/PANTOATE-BETA-ALANINE LIGASE"/>
    <property type="match status" value="1"/>
</dbReference>
<dbReference type="Pfam" id="PF02224">
    <property type="entry name" value="Cytidylate_kin"/>
    <property type="match status" value="1"/>
</dbReference>
<dbReference type="SUPFAM" id="SSF52540">
    <property type="entry name" value="P-loop containing nucleoside triphosphate hydrolases"/>
    <property type="match status" value="1"/>
</dbReference>
<proteinExistence type="inferred from homology"/>
<keyword id="KW-0067">ATP-binding</keyword>
<keyword id="KW-0963">Cytoplasm</keyword>
<keyword id="KW-0418">Kinase</keyword>
<keyword id="KW-0547">Nucleotide-binding</keyword>
<keyword id="KW-0808">Transferase</keyword>